<evidence type="ECO:0000256" key="1">
    <source>
        <dbReference type="SAM" id="MobiDB-lite"/>
    </source>
</evidence>
<evidence type="ECO:0000305" key="2"/>
<evidence type="ECO:0000312" key="3">
    <source>
        <dbReference type="HGNC" id="HGNC:53837"/>
    </source>
</evidence>
<sequence length="210" mass="21866">MEEPRHSKRPRFLAPNQASGGPPTEPGCSGVDREDPVDPVQPAKPTAYVKPMRREPPARAQPAPPAGRGQRGGGSWRAGRGRGSGAGLLRALGERVGPGMYLVHLNDHGELGYQGQLEARQTPAFSFTEAALMPGIVQEGPGPHAAQPEVGLQEPPPAPGPVAVARQTMLAPSPSLSFRPPGGSSTLCIVQTSNSTIVQSVPVFPAHSAH</sequence>
<dbReference type="EMBL" id="AC133681">
    <property type="status" value="NOT_ANNOTATED_CDS"/>
    <property type="molecule type" value="Genomic_DNA"/>
</dbReference>
<dbReference type="CCDS" id="CCDS93365.1"/>
<dbReference type="RefSeq" id="NP_001349739.1">
    <property type="nucleotide sequence ID" value="NM_001362810.2"/>
</dbReference>
<dbReference type="GlyGen" id="P0DPQ3">
    <property type="glycosylation" value="1 site, 1 O-linked glycan (1 site)"/>
</dbReference>
<dbReference type="MassIVE" id="P0DPQ3"/>
<dbReference type="PeptideAtlas" id="P0DPQ3"/>
<dbReference type="Ensembl" id="ENST00000465482.3">
    <property type="protein sequence ID" value="ENSP00000497409.1"/>
    <property type="gene ID" value="ENSG00000239620.3"/>
</dbReference>
<dbReference type="GeneID" id="100419008"/>
<dbReference type="MANE-Select" id="ENST00000465482.3">
    <property type="protein sequence ID" value="ENSP00000497409.1"/>
    <property type="RefSeq nucleotide sequence ID" value="NM_001362810.2"/>
    <property type="RefSeq protein sequence ID" value="NP_001349739.1"/>
</dbReference>
<dbReference type="AGR" id="HGNC:53837"/>
<dbReference type="GeneCards" id="PRR20G"/>
<dbReference type="HGNC" id="HGNC:53837">
    <property type="gene designation" value="PRR20G"/>
</dbReference>
<dbReference type="HPA" id="ENSG00000239620">
    <property type="expression patterns" value="Tissue enriched (testis)"/>
</dbReference>
<dbReference type="neXtProt" id="NX_P0DPQ3"/>
<dbReference type="OpenTargets" id="ENSG00000239620"/>
<dbReference type="VEuPathDB" id="HostDB:ENSG00000239620"/>
<dbReference type="GeneTree" id="ENSGT00390000001542"/>
<dbReference type="InParanoid" id="P0DPQ3"/>
<dbReference type="OMA" id="FTEAAPM"/>
<dbReference type="OrthoDB" id="9539181at2759"/>
<dbReference type="PAN-GO" id="P0DPQ3">
    <property type="GO annotations" value="0 GO annotations based on evolutionary models"/>
</dbReference>
<dbReference type="ChiTaRS" id="PRR20G">
    <property type="organism name" value="human"/>
</dbReference>
<dbReference type="Pharos" id="P0DPQ3">
    <property type="development level" value="Tdark"/>
</dbReference>
<dbReference type="PRO" id="PR:P0DPQ3"/>
<dbReference type="Proteomes" id="UP000005640">
    <property type="component" value="Chromosome 3"/>
</dbReference>
<dbReference type="Bgee" id="ENSG00000239620">
    <property type="expression patterns" value="Expressed in primordial germ cell in gonad and 12 other cell types or tissues"/>
</dbReference>
<dbReference type="InterPro" id="IPR031439">
    <property type="entry name" value="PRR20"/>
</dbReference>
<dbReference type="PANTHER" id="PTHR38819">
    <property type="entry name" value="PROLINE-RICH PROTEIN 20A-RELATED"/>
    <property type="match status" value="1"/>
</dbReference>
<dbReference type="PANTHER" id="PTHR38819:SF1">
    <property type="entry name" value="PROLINE-RICH PROTEIN 20G"/>
    <property type="match status" value="1"/>
</dbReference>
<dbReference type="Pfam" id="PF15708">
    <property type="entry name" value="PRR20"/>
    <property type="match status" value="1"/>
</dbReference>
<accession>P0DPQ3</accession>
<comment type="similarity">
    <text evidence="2">Belongs to the PRR20 family.</text>
</comment>
<feature type="chain" id="PRO_0000445241" description="Proline-rich protein 20G">
    <location>
        <begin position="1"/>
        <end position="210"/>
    </location>
</feature>
<feature type="region of interest" description="Disordered" evidence="1">
    <location>
        <begin position="1"/>
        <end position="82"/>
    </location>
</feature>
<feature type="compositionally biased region" description="Basic residues" evidence="1">
    <location>
        <begin position="1"/>
        <end position="11"/>
    </location>
</feature>
<feature type="compositionally biased region" description="Gly residues" evidence="1">
    <location>
        <begin position="69"/>
        <end position="82"/>
    </location>
</feature>
<protein>
    <recommendedName>
        <fullName evidence="2">Proline-rich protein 20G</fullName>
    </recommendedName>
</protein>
<organism>
    <name type="scientific">Homo sapiens</name>
    <name type="common">Human</name>
    <dbReference type="NCBI Taxonomy" id="9606"/>
    <lineage>
        <taxon>Eukaryota</taxon>
        <taxon>Metazoa</taxon>
        <taxon>Chordata</taxon>
        <taxon>Craniata</taxon>
        <taxon>Vertebrata</taxon>
        <taxon>Euteleostomi</taxon>
        <taxon>Mammalia</taxon>
        <taxon>Eutheria</taxon>
        <taxon>Euarchontoglires</taxon>
        <taxon>Primates</taxon>
        <taxon>Haplorrhini</taxon>
        <taxon>Catarrhini</taxon>
        <taxon>Hominidae</taxon>
        <taxon>Homo</taxon>
    </lineage>
</organism>
<reference key="1">
    <citation type="journal article" date="2006" name="Nature">
        <title>The DNA sequence, annotation and analysis of human chromosome 3.</title>
        <authorList>
            <person name="Muzny D.M."/>
            <person name="Scherer S.E."/>
            <person name="Kaul R."/>
            <person name="Wang J."/>
            <person name="Yu J."/>
            <person name="Sudbrak R."/>
            <person name="Buhay C.J."/>
            <person name="Chen R."/>
            <person name="Cree A."/>
            <person name="Ding Y."/>
            <person name="Dugan-Rocha S."/>
            <person name="Gill R."/>
            <person name="Gunaratne P."/>
            <person name="Harris R.A."/>
            <person name="Hawes A.C."/>
            <person name="Hernandez J."/>
            <person name="Hodgson A.V."/>
            <person name="Hume J."/>
            <person name="Jackson A."/>
            <person name="Khan Z.M."/>
            <person name="Kovar-Smith C."/>
            <person name="Lewis L.R."/>
            <person name="Lozado R.J."/>
            <person name="Metzker M.L."/>
            <person name="Milosavljevic A."/>
            <person name="Miner G.R."/>
            <person name="Morgan M.B."/>
            <person name="Nazareth L.V."/>
            <person name="Scott G."/>
            <person name="Sodergren E."/>
            <person name="Song X.-Z."/>
            <person name="Steffen D."/>
            <person name="Wei S."/>
            <person name="Wheeler D.A."/>
            <person name="Wright M.W."/>
            <person name="Worley K.C."/>
            <person name="Yuan Y."/>
            <person name="Zhang Z."/>
            <person name="Adams C.Q."/>
            <person name="Ansari-Lari M.A."/>
            <person name="Ayele M."/>
            <person name="Brown M.J."/>
            <person name="Chen G."/>
            <person name="Chen Z."/>
            <person name="Clendenning J."/>
            <person name="Clerc-Blankenburg K.P."/>
            <person name="Chen R."/>
            <person name="Chen Z."/>
            <person name="Davis C."/>
            <person name="Delgado O."/>
            <person name="Dinh H.H."/>
            <person name="Dong W."/>
            <person name="Draper H."/>
            <person name="Ernst S."/>
            <person name="Fu G."/>
            <person name="Gonzalez-Garay M.L."/>
            <person name="Garcia D.K."/>
            <person name="Gillett W."/>
            <person name="Gu J."/>
            <person name="Hao B."/>
            <person name="Haugen E."/>
            <person name="Havlak P."/>
            <person name="He X."/>
            <person name="Hennig S."/>
            <person name="Hu S."/>
            <person name="Huang W."/>
            <person name="Jackson L.R."/>
            <person name="Jacob L.S."/>
            <person name="Kelly S.H."/>
            <person name="Kube M."/>
            <person name="Levy R."/>
            <person name="Li Z."/>
            <person name="Liu B."/>
            <person name="Liu J."/>
            <person name="Liu W."/>
            <person name="Lu J."/>
            <person name="Maheshwari M."/>
            <person name="Nguyen B.-V."/>
            <person name="Okwuonu G.O."/>
            <person name="Palmeiri A."/>
            <person name="Pasternak S."/>
            <person name="Perez L.M."/>
            <person name="Phelps K.A."/>
            <person name="Plopper F.J."/>
            <person name="Qiang B."/>
            <person name="Raymond C."/>
            <person name="Rodriguez R."/>
            <person name="Saenphimmachak C."/>
            <person name="Santibanez J."/>
            <person name="Shen H."/>
            <person name="Shen Y."/>
            <person name="Subramanian S."/>
            <person name="Tabor P.E."/>
            <person name="Verduzco D."/>
            <person name="Waldron L."/>
            <person name="Wang J."/>
            <person name="Wang J."/>
            <person name="Wang Q."/>
            <person name="Williams G.A."/>
            <person name="Wong G.K.-S."/>
            <person name="Yao Z."/>
            <person name="Zhang J."/>
            <person name="Zhang X."/>
            <person name="Zhao G."/>
            <person name="Zhou J."/>
            <person name="Zhou Y."/>
            <person name="Nelson D."/>
            <person name="Lehrach H."/>
            <person name="Reinhardt R."/>
            <person name="Naylor S.L."/>
            <person name="Yang H."/>
            <person name="Olson M."/>
            <person name="Weinstock G."/>
            <person name="Gibbs R.A."/>
        </authorList>
    </citation>
    <scope>NUCLEOTIDE SEQUENCE [LARGE SCALE GENOMIC DNA]</scope>
</reference>
<proteinExistence type="inferred from homology"/>
<name>PR20G_HUMAN</name>
<gene>
    <name evidence="3" type="primary">PRR20G</name>
</gene>
<keyword id="KW-1185">Reference proteome</keyword>